<comment type="function">
    <text>Acrosin is the major protease of mammalian spermatozoa. It is a serine protease of trypsin-like cleavage specificity, it is synthesized in a zymogen form, proacrosin and stored in the acrosome.</text>
</comment>
<comment type="catalytic activity">
    <reaction>
        <text>Preferential cleavage: Arg-|-Xaa, Lys-|-Xaa.</text>
        <dbReference type="EC" id="3.4.21.10"/>
    </reaction>
</comment>
<comment type="activity regulation">
    <text evidence="1">Inhibited by SERPINA5.</text>
</comment>
<comment type="subunit">
    <text evidence="1">Heavy chain (catalytic) and a light chain linked by two disulfide bonds. Forms a heterodimer with SERPINA5 (By similarity).</text>
</comment>
<comment type="similarity">
    <text evidence="2">Belongs to the peptidase S1 family.</text>
</comment>
<protein>
    <recommendedName>
        <fullName>Acrosin</fullName>
        <ecNumber>3.4.21.10</ecNumber>
    </recommendedName>
    <component>
        <recommendedName>
            <fullName>Acrosin light chain</fullName>
        </recommendedName>
    </component>
    <component>
        <recommendedName>
            <fullName>Acrosin heavy chain</fullName>
        </recommendedName>
    </component>
</protein>
<accession>Q9GL10</accession>
<sequence length="329" mass="36119">MLPTAVLLVLAVSVVARDNTTCDGPCGVRFRQNRQGGVRIIGGQDAAHGAWPWMVSLQIFTYHNNRRYHVCGGSLLNSQWLLTAAHCFRIKKKVTDWRLIFGAKEVEWGTNKPVKPPLQERYVEKIIIHEKYSASSEANDIALMKITPPVTCGHFIGPGCLPQFRAGPPRVPQTCWVAGWGFLQENARRTSPMLQEARVDLIDLGLCNSTRWYNGRIRSTNVCAGYPEGKIDTCQGDSGGPLMCKDSAENSYVVVGITSWGVGCARAKRPGVYTSTWSYLNWIASKIGSTAVHMIQLPTASPASTPGAQASSGSVQPSVRPPWFFQQIT</sequence>
<name>ACRO_SHEEP</name>
<evidence type="ECO:0000250" key="1"/>
<evidence type="ECO:0000255" key="2">
    <source>
        <dbReference type="PROSITE-ProRule" id="PRU00274"/>
    </source>
</evidence>
<evidence type="ECO:0007829" key="3">
    <source>
        <dbReference type="PDB" id="1FIW"/>
    </source>
</evidence>
<keyword id="KW-0002">3D-structure</keyword>
<keyword id="KW-1015">Disulfide bond</keyword>
<keyword id="KW-0325">Glycoprotein</keyword>
<keyword id="KW-0378">Hydrolase</keyword>
<keyword id="KW-0645">Protease</keyword>
<keyword id="KW-1185">Reference proteome</keyword>
<keyword id="KW-0720">Serine protease</keyword>
<keyword id="KW-0732">Signal</keyword>
<keyword id="KW-0865">Zymogen</keyword>
<organism>
    <name type="scientific">Ovis aries</name>
    <name type="common">Sheep</name>
    <dbReference type="NCBI Taxonomy" id="9940"/>
    <lineage>
        <taxon>Eukaryota</taxon>
        <taxon>Metazoa</taxon>
        <taxon>Chordata</taxon>
        <taxon>Craniata</taxon>
        <taxon>Vertebrata</taxon>
        <taxon>Euteleostomi</taxon>
        <taxon>Mammalia</taxon>
        <taxon>Eutheria</taxon>
        <taxon>Laurasiatheria</taxon>
        <taxon>Artiodactyla</taxon>
        <taxon>Ruminantia</taxon>
        <taxon>Pecora</taxon>
        <taxon>Bovidae</taxon>
        <taxon>Caprinae</taxon>
        <taxon>Ovis</taxon>
    </lineage>
</organism>
<dbReference type="EC" id="3.4.21.10"/>
<dbReference type="EMBL" id="AJ278742">
    <property type="protein sequence ID" value="CAC15386.1"/>
    <property type="molecule type" value="mRNA"/>
</dbReference>
<dbReference type="PDB" id="1FIW">
    <property type="method" value="X-ray"/>
    <property type="resolution" value="2.10 A"/>
    <property type="chains" value="A=40-329, L=18-39"/>
</dbReference>
<dbReference type="PDBsum" id="1FIW"/>
<dbReference type="SMR" id="Q9GL10"/>
<dbReference type="STRING" id="9940.ENSOARP00000021514"/>
<dbReference type="MEROPS" id="S01.223"/>
<dbReference type="GlyCosmos" id="Q9GL10">
    <property type="glycosylation" value="2 sites, No reported glycans"/>
</dbReference>
<dbReference type="PaxDb" id="9940-ENSOARP00000021514"/>
<dbReference type="eggNOG" id="KOG3627">
    <property type="taxonomic scope" value="Eukaryota"/>
</dbReference>
<dbReference type="BRENDA" id="3.4.21.10">
    <property type="organism ID" value="2668"/>
</dbReference>
<dbReference type="EvolutionaryTrace" id="Q9GL10"/>
<dbReference type="Proteomes" id="UP000002356">
    <property type="component" value="Unplaced"/>
</dbReference>
<dbReference type="GO" id="GO:0001669">
    <property type="term" value="C:acrosomal vesicle"/>
    <property type="evidence" value="ECO:0007669"/>
    <property type="project" value="InterPro"/>
</dbReference>
<dbReference type="GO" id="GO:0004040">
    <property type="term" value="F:amidase activity"/>
    <property type="evidence" value="ECO:0000250"/>
    <property type="project" value="UniProtKB"/>
</dbReference>
<dbReference type="GO" id="GO:0005537">
    <property type="term" value="F:D-mannose binding"/>
    <property type="evidence" value="ECO:0000250"/>
    <property type="project" value="UniProtKB"/>
</dbReference>
<dbReference type="GO" id="GO:0042806">
    <property type="term" value="F:fucose binding"/>
    <property type="evidence" value="ECO:0000250"/>
    <property type="project" value="UniProtKB"/>
</dbReference>
<dbReference type="GO" id="GO:0004252">
    <property type="term" value="F:serine-type endopeptidase activity"/>
    <property type="evidence" value="ECO:0000250"/>
    <property type="project" value="UniProtKB"/>
</dbReference>
<dbReference type="GO" id="GO:0008236">
    <property type="term" value="F:serine-type peptidase activity"/>
    <property type="evidence" value="ECO:0000314"/>
    <property type="project" value="UniProtKB"/>
</dbReference>
<dbReference type="GO" id="GO:0007340">
    <property type="term" value="P:acrosome reaction"/>
    <property type="evidence" value="ECO:0000250"/>
    <property type="project" value="UniProtKB"/>
</dbReference>
<dbReference type="GO" id="GO:0007190">
    <property type="term" value="P:activation of adenylate cyclase activity"/>
    <property type="evidence" value="ECO:0000250"/>
    <property type="project" value="UniProtKB"/>
</dbReference>
<dbReference type="GO" id="GO:0006508">
    <property type="term" value="P:proteolysis"/>
    <property type="evidence" value="ECO:0000314"/>
    <property type="project" value="UniProtKB"/>
</dbReference>
<dbReference type="GO" id="GO:0007338">
    <property type="term" value="P:single fertilization"/>
    <property type="evidence" value="ECO:0000250"/>
    <property type="project" value="UniProtKB"/>
</dbReference>
<dbReference type="CDD" id="cd00190">
    <property type="entry name" value="Tryp_SPc"/>
    <property type="match status" value="1"/>
</dbReference>
<dbReference type="FunFam" id="2.40.10.10:FF:000003">
    <property type="entry name" value="Transmembrane serine protease 3"/>
    <property type="match status" value="1"/>
</dbReference>
<dbReference type="Gene3D" id="2.40.10.10">
    <property type="entry name" value="Trypsin-like serine proteases"/>
    <property type="match status" value="2"/>
</dbReference>
<dbReference type="InterPro" id="IPR012267">
    <property type="entry name" value="Pept_S1A_acrosin"/>
</dbReference>
<dbReference type="InterPro" id="IPR009003">
    <property type="entry name" value="Peptidase_S1_PA"/>
</dbReference>
<dbReference type="InterPro" id="IPR043504">
    <property type="entry name" value="Peptidase_S1_PA_chymotrypsin"/>
</dbReference>
<dbReference type="InterPro" id="IPR001314">
    <property type="entry name" value="Peptidase_S1A"/>
</dbReference>
<dbReference type="InterPro" id="IPR001254">
    <property type="entry name" value="Trypsin_dom"/>
</dbReference>
<dbReference type="InterPro" id="IPR018114">
    <property type="entry name" value="TRYPSIN_HIS"/>
</dbReference>
<dbReference type="InterPro" id="IPR033116">
    <property type="entry name" value="TRYPSIN_SER"/>
</dbReference>
<dbReference type="PANTHER" id="PTHR24252:SF8">
    <property type="entry name" value="ACROSIN"/>
    <property type="match status" value="1"/>
</dbReference>
<dbReference type="PANTHER" id="PTHR24252">
    <property type="entry name" value="ACROSIN-RELATED"/>
    <property type="match status" value="1"/>
</dbReference>
<dbReference type="Pfam" id="PF00089">
    <property type="entry name" value="Trypsin"/>
    <property type="match status" value="1"/>
</dbReference>
<dbReference type="PIRSF" id="PIRSF001141">
    <property type="entry name" value="Acrosin"/>
    <property type="match status" value="1"/>
</dbReference>
<dbReference type="PRINTS" id="PR00722">
    <property type="entry name" value="CHYMOTRYPSIN"/>
</dbReference>
<dbReference type="SMART" id="SM00020">
    <property type="entry name" value="Tryp_SPc"/>
    <property type="match status" value="1"/>
</dbReference>
<dbReference type="SUPFAM" id="SSF50494">
    <property type="entry name" value="Trypsin-like serine proteases"/>
    <property type="match status" value="1"/>
</dbReference>
<dbReference type="PROSITE" id="PS50240">
    <property type="entry name" value="TRYPSIN_DOM"/>
    <property type="match status" value="1"/>
</dbReference>
<dbReference type="PROSITE" id="PS00134">
    <property type="entry name" value="TRYPSIN_HIS"/>
    <property type="match status" value="1"/>
</dbReference>
<dbReference type="PROSITE" id="PS00135">
    <property type="entry name" value="TRYPSIN_SER"/>
    <property type="match status" value="1"/>
</dbReference>
<gene>
    <name type="primary">ACR</name>
</gene>
<reference key="1">
    <citation type="journal article" date="2000" name="Structure">
        <title>Effector sites in the three dimensional structure of mammalian sperm beta-acrosin.</title>
        <authorList>
            <person name="Tranter R."/>
            <person name="Read J.A."/>
            <person name="Jones R."/>
            <person name="Brady R.L."/>
        </authorList>
    </citation>
    <scope>NUCLEOTIDE SEQUENCE [MRNA]</scope>
    <scope>X-RAY CRYSTALLOGRAPHY (2.1 ANGSTROMS) OF 18-329</scope>
    <source>
        <tissue>Testis</tissue>
    </source>
</reference>
<proteinExistence type="evidence at protein level"/>
<feature type="signal peptide">
    <location>
        <begin position="1"/>
        <end position="17"/>
    </location>
</feature>
<feature type="chain" id="PRO_0000027538" description="Acrosin">
    <location>
        <begin position="18"/>
        <end position="329"/>
    </location>
</feature>
<feature type="chain" id="PRO_0000027539" description="Acrosin light chain">
    <location>
        <begin position="18"/>
        <end position="39"/>
    </location>
</feature>
<feature type="chain" id="PRO_0000027540" description="Acrosin heavy chain">
    <location>
        <begin position="40"/>
        <end position="329" status="greater than"/>
    </location>
</feature>
<feature type="domain" description="Peptidase S1" evidence="2">
    <location>
        <begin position="40"/>
        <end position="288"/>
    </location>
</feature>
<feature type="active site" description="Charge relay system">
    <location>
        <position position="86"/>
    </location>
</feature>
<feature type="active site" description="Charge relay system">
    <location>
        <position position="140"/>
    </location>
</feature>
<feature type="active site" description="Charge relay system">
    <location>
        <position position="238"/>
    </location>
</feature>
<feature type="glycosylation site" description="N-linked (GlcNAc...) asparagine" evidence="1">
    <location>
        <position position="19"/>
    </location>
</feature>
<feature type="glycosylation site" description="N-linked (GlcNAc...) asparagine">
    <location>
        <position position="208"/>
    </location>
</feature>
<feature type="disulfide bond" description="Interchain (between light and heavy chains)">
    <location>
        <begin position="22"/>
        <end position="152"/>
    </location>
</feature>
<feature type="disulfide bond" description="Interchain (between light and heavy chains)">
    <location>
        <begin position="26"/>
        <end position="160"/>
    </location>
</feature>
<feature type="disulfide bond">
    <location>
        <begin position="71"/>
        <end position="87"/>
    </location>
</feature>
<feature type="disulfide bond">
    <location>
        <begin position="175"/>
        <end position="244"/>
    </location>
</feature>
<feature type="disulfide bond">
    <location>
        <begin position="207"/>
        <end position="223"/>
    </location>
</feature>
<feature type="disulfide bond">
    <location>
        <begin position="234"/>
        <end position="264"/>
    </location>
</feature>
<feature type="non-terminal residue">
    <location>
        <position position="329"/>
    </location>
</feature>
<feature type="strand" evidence="3">
    <location>
        <begin position="54"/>
        <end position="61"/>
    </location>
</feature>
<feature type="turn" evidence="3">
    <location>
        <begin position="62"/>
        <end position="65"/>
    </location>
</feature>
<feature type="strand" evidence="3">
    <location>
        <begin position="66"/>
        <end position="77"/>
    </location>
</feature>
<feature type="strand" evidence="3">
    <location>
        <begin position="80"/>
        <end position="83"/>
    </location>
</feature>
<feature type="helix" evidence="3">
    <location>
        <begin position="85"/>
        <end position="88"/>
    </location>
</feature>
<feature type="helix" evidence="3">
    <location>
        <begin position="94"/>
        <end position="96"/>
    </location>
</feature>
<feature type="strand" evidence="3">
    <location>
        <begin position="97"/>
        <end position="102"/>
    </location>
</feature>
<feature type="strand" evidence="3">
    <location>
        <begin position="119"/>
        <end position="128"/>
    </location>
</feature>
<feature type="turn" evidence="3">
    <location>
        <begin position="134"/>
        <end position="137"/>
    </location>
</feature>
<feature type="strand" evidence="3">
    <location>
        <begin position="142"/>
        <end position="148"/>
    </location>
</feature>
<feature type="strand" evidence="3">
    <location>
        <begin position="174"/>
        <end position="180"/>
    </location>
</feature>
<feature type="strand" evidence="3">
    <location>
        <begin position="195"/>
        <end position="202"/>
    </location>
</feature>
<feature type="helix" evidence="3">
    <location>
        <begin position="204"/>
        <end position="207"/>
    </location>
</feature>
<feature type="turn" evidence="3">
    <location>
        <begin position="210"/>
        <end position="215"/>
    </location>
</feature>
<feature type="strand" evidence="3">
    <location>
        <begin position="221"/>
        <end position="225"/>
    </location>
</feature>
<feature type="strand" evidence="3">
    <location>
        <begin position="230"/>
        <end position="232"/>
    </location>
</feature>
<feature type="strand" evidence="3">
    <location>
        <begin position="241"/>
        <end position="245"/>
    </location>
</feature>
<feature type="strand" evidence="3">
    <location>
        <begin position="247"/>
        <end position="250"/>
    </location>
</feature>
<feature type="strand" evidence="3">
    <location>
        <begin position="252"/>
        <end position="260"/>
    </location>
</feature>
<feature type="strand" evidence="3">
    <location>
        <begin position="262"/>
        <end position="266"/>
    </location>
</feature>
<feature type="strand" evidence="3">
    <location>
        <begin position="271"/>
        <end position="276"/>
    </location>
</feature>
<feature type="helix" evidence="3">
    <location>
        <begin position="277"/>
        <end position="279"/>
    </location>
</feature>
<feature type="helix" evidence="3">
    <location>
        <begin position="280"/>
        <end position="287"/>
    </location>
</feature>
<feature type="helix" evidence="3">
    <location>
        <begin position="289"/>
        <end position="294"/>
    </location>
</feature>